<proteinExistence type="evidence at transcript level"/>
<feature type="chain" id="PRO_0000420125" description="Pickpocket protein 11">
    <location>
        <begin position="1"/>
        <end position="516"/>
    </location>
</feature>
<feature type="transmembrane region" description="Helical" evidence="1">
    <location>
        <begin position="117"/>
        <end position="137"/>
    </location>
</feature>
<feature type="transmembrane region" description="Helical" evidence="1">
    <location>
        <begin position="454"/>
        <end position="474"/>
    </location>
</feature>
<sequence length="516" mass="59999">MSDVPGEDSPTHFYPVNFENYLRPKQSIKCQPLQRFKKPNERATNLYRNLKRLKILRWYNRVSKRFEEFPLPKFLGFLQARNDDGLCKRKTGFEIYCEMASIHGFHIFVGAKTWQRILWWLLICNAVLLSFTLVIMSLSMSKETPTIRFIDTMMKPTAEVPFPAVTICGFNTKEWMNSSQIVNQRNASWLELLEDLALPICPQIKICQWDNRMVNCLDQLQPIWTLDQRLCCSFNYNKQLFSSYLGVSFVLRSNDEILQSSKSAGFEVLIHESHEIPNGATPRVFVPGESDAHIMLRPYINRFTKNLKGLSLQKRGCYFSTERRLILSDVYNQINCLAECRTESILKSCGCIPPKSPIEKSWLICDLKQMQCVIDFDHDEIISGEQKNCDCLPPCEFNRYEFQSDIRFIKGMINNSIVNTSNQETTNEVRVRVYYDSAIAEELLLDVYENWLTFIGTFGGITGLFMGCSFVSVFELIFFSCVRPTCNWLTRQQILWRRRRNQRVGITESRSLGPAN</sequence>
<dbReference type="EMBL" id="AY226542">
    <property type="protein sequence ID" value="AAO47368.1"/>
    <property type="molecule type" value="mRNA"/>
</dbReference>
<dbReference type="EMBL" id="AE014134">
    <property type="protein sequence ID" value="AAF52812.2"/>
    <property type="molecule type" value="Genomic_DNA"/>
</dbReference>
<dbReference type="RefSeq" id="NP_001334672.1">
    <property type="nucleotide sequence ID" value="NM_001347761.1"/>
</dbReference>
<dbReference type="BioGRID" id="60396">
    <property type="interactions" value="2"/>
</dbReference>
<dbReference type="FunCoup" id="Q9VL84">
    <property type="interactions" value="6"/>
</dbReference>
<dbReference type="STRING" id="7227.FBpp0100162"/>
<dbReference type="PaxDb" id="7227-FBpp0100162"/>
<dbReference type="EnsemblMetazoa" id="FBtr0100831">
    <property type="protein sequence ID" value="FBpp0100162"/>
    <property type="gene ID" value="FBgn0065109"/>
</dbReference>
<dbReference type="GeneID" id="34299"/>
<dbReference type="KEGG" id="dme:Dmel_CG34058"/>
<dbReference type="UCSC" id="CG34058-RA">
    <property type="organism name" value="d. melanogaster"/>
</dbReference>
<dbReference type="AGR" id="FB:FBgn0065109"/>
<dbReference type="CTD" id="34299"/>
<dbReference type="FlyBase" id="FBgn0065109">
    <property type="gene designation" value="ppk11"/>
</dbReference>
<dbReference type="VEuPathDB" id="VectorBase:FBgn0065109"/>
<dbReference type="eggNOG" id="KOG4294">
    <property type="taxonomic scope" value="Eukaryota"/>
</dbReference>
<dbReference type="GeneTree" id="ENSGT00940000171214"/>
<dbReference type="HOGENOM" id="CLU_024950_1_1_1"/>
<dbReference type="InParanoid" id="Q9VL84"/>
<dbReference type="OMA" id="RWHSRII"/>
<dbReference type="OrthoDB" id="6502088at2759"/>
<dbReference type="PhylomeDB" id="Q9VL84"/>
<dbReference type="Reactome" id="R-DME-2672351">
    <property type="pathway name" value="Stimuli-sensing channels"/>
</dbReference>
<dbReference type="BioGRID-ORCS" id="34299">
    <property type="hits" value="0 hits in 1 CRISPR screen"/>
</dbReference>
<dbReference type="GenomeRNAi" id="34299"/>
<dbReference type="PRO" id="PR:Q9VL84"/>
<dbReference type="Proteomes" id="UP000000803">
    <property type="component" value="Chromosome 2L"/>
</dbReference>
<dbReference type="Bgee" id="FBgn0065109">
    <property type="expression patterns" value="Expressed in embryonic/larval transverse connective (Drosophila) and 3 other cell types or tissues"/>
</dbReference>
<dbReference type="GO" id="GO:0016020">
    <property type="term" value="C:membrane"/>
    <property type="evidence" value="ECO:0000250"/>
    <property type="project" value="FlyBase"/>
</dbReference>
<dbReference type="GO" id="GO:0005886">
    <property type="term" value="C:plasma membrane"/>
    <property type="evidence" value="ECO:0000318"/>
    <property type="project" value="GO_Central"/>
</dbReference>
<dbReference type="GO" id="GO:0015280">
    <property type="term" value="F:ligand-gated sodium channel activity"/>
    <property type="evidence" value="ECO:0000318"/>
    <property type="project" value="GO_Central"/>
</dbReference>
<dbReference type="GO" id="GO:0005272">
    <property type="term" value="F:sodium channel activity"/>
    <property type="evidence" value="ECO:0000250"/>
    <property type="project" value="FlyBase"/>
</dbReference>
<dbReference type="GO" id="GO:0035002">
    <property type="term" value="P:liquid clearance, open tracheal system"/>
    <property type="evidence" value="ECO:0000315"/>
    <property type="project" value="FlyBase"/>
</dbReference>
<dbReference type="GO" id="GO:0060025">
    <property type="term" value="P:regulation of synaptic activity"/>
    <property type="evidence" value="ECO:0000315"/>
    <property type="project" value="FlyBase"/>
</dbReference>
<dbReference type="GO" id="GO:0009651">
    <property type="term" value="P:response to salt stress"/>
    <property type="evidence" value="ECO:0000315"/>
    <property type="project" value="UniProtKB"/>
</dbReference>
<dbReference type="GO" id="GO:0035199">
    <property type="term" value="P:salt aversion"/>
    <property type="evidence" value="ECO:0000315"/>
    <property type="project" value="UniProtKB"/>
</dbReference>
<dbReference type="GO" id="GO:0050914">
    <property type="term" value="P:sensory perception of salty taste"/>
    <property type="evidence" value="ECO:0000315"/>
    <property type="project" value="FlyBase"/>
</dbReference>
<dbReference type="GO" id="GO:0035725">
    <property type="term" value="P:sodium ion transmembrane transport"/>
    <property type="evidence" value="ECO:0000318"/>
    <property type="project" value="GO_Central"/>
</dbReference>
<dbReference type="GO" id="GO:0006814">
    <property type="term" value="P:sodium ion transport"/>
    <property type="evidence" value="ECO:0000250"/>
    <property type="project" value="FlyBase"/>
</dbReference>
<dbReference type="Gene3D" id="1.10.287.820">
    <property type="entry name" value="Acid-sensing ion channel domain"/>
    <property type="match status" value="1"/>
</dbReference>
<dbReference type="Gene3D" id="1.10.287.770">
    <property type="entry name" value="YojJ-like"/>
    <property type="match status" value="1"/>
</dbReference>
<dbReference type="InterPro" id="IPR001873">
    <property type="entry name" value="ENaC"/>
</dbReference>
<dbReference type="InterPro" id="IPR020903">
    <property type="entry name" value="ENaC_CS"/>
</dbReference>
<dbReference type="PANTHER" id="PTHR11690">
    <property type="entry name" value="AMILORIDE-SENSITIVE SODIUM CHANNEL-RELATED"/>
    <property type="match status" value="1"/>
</dbReference>
<dbReference type="PANTHER" id="PTHR11690:SF237">
    <property type="entry name" value="PICKPOCKET 16-RELATED"/>
    <property type="match status" value="1"/>
</dbReference>
<dbReference type="Pfam" id="PF00858">
    <property type="entry name" value="ASC"/>
    <property type="match status" value="2"/>
</dbReference>
<dbReference type="PROSITE" id="PS01206">
    <property type="entry name" value="ASC"/>
    <property type="match status" value="1"/>
</dbReference>
<evidence type="ECO:0000255" key="1"/>
<evidence type="ECO:0000269" key="2">
    <source>
    </source>
</evidence>
<evidence type="ECO:0000269" key="3">
    <source>
    </source>
</evidence>
<evidence type="ECO:0000303" key="4">
    <source>
    </source>
</evidence>
<evidence type="ECO:0000305" key="5"/>
<evidence type="ECO:0000312" key="6">
    <source>
        <dbReference type="EMBL" id="AAF52812.2"/>
    </source>
</evidence>
<evidence type="ECO:0000312" key="7">
    <source>
        <dbReference type="EMBL" id="AAO47368.1"/>
    </source>
</evidence>
<comment type="function">
    <text evidence="2 3 4">Part of a complex that plays a role in tracheal liquid clearance. In both larvae and adults, contributes to the behavioral response to salt. Probable role in sodium transport.</text>
</comment>
<comment type="subcellular location">
    <subcellularLocation>
        <location evidence="1">Membrane</location>
        <topology evidence="1">Multi-pass membrane protein</topology>
    </subcellularLocation>
</comment>
<comment type="tissue specificity">
    <text evidence="2 3">Expressed in embryonic and larval tracheal systems in the dorsal trunk and transverse connective (TC), but not in the junction between the dorsal trunk and TC, and in several tracheal branches and terminal cells. In larvae, also expressed in ventral pits. Expressed in the taste-sensing terminal organ of the larval head. In adult, expressed in hairs on the tibia, femur, tarsi of the leg and wing margin.</text>
</comment>
<comment type="developmental stage">
    <text evidence="2">Expression is first detected during late embryogenesis, at stage 15 in the dorsal trunk. At stage 16, expression is observed in the TC and extends into the primary branches. By stage 17, expression is more extensive in the primary branches and in some secondary branches.</text>
</comment>
<comment type="similarity">
    <text evidence="5">Belongs to the amiloride-sensitive sodium channel (TC 1.A.6) family.</text>
</comment>
<keyword id="KW-0407">Ion channel</keyword>
<keyword id="KW-0406">Ion transport</keyword>
<keyword id="KW-0472">Membrane</keyword>
<keyword id="KW-1185">Reference proteome</keyword>
<keyword id="KW-0915">Sodium</keyword>
<keyword id="KW-0894">Sodium channel</keyword>
<keyword id="KW-0739">Sodium transport</keyword>
<keyword id="KW-0812">Transmembrane</keyword>
<keyword id="KW-1133">Transmembrane helix</keyword>
<keyword id="KW-0813">Transport</keyword>
<reference evidence="5 7" key="1">
    <citation type="journal article" date="2003" name="Proc. Natl. Acad. Sci. U.S.A.">
        <title>Drosophila DEG/ENaC pickpocket genes are expressed in the tracheal system, where they may be involved in liquid clearance.</title>
        <authorList>
            <person name="Liu L."/>
            <person name="Johnson W.A."/>
            <person name="Welsh M.J."/>
        </authorList>
    </citation>
    <scope>NUCLEOTIDE SEQUENCE [MRNA]</scope>
    <scope>FUNCTION</scope>
    <scope>TISSUE SPECIFICITY</scope>
    <scope>DEVELOPMENTAL STAGE</scope>
</reference>
<reference evidence="6" key="2">
    <citation type="journal article" date="2000" name="Science">
        <title>The genome sequence of Drosophila melanogaster.</title>
        <authorList>
            <person name="Adams M.D."/>
            <person name="Celniker S.E."/>
            <person name="Holt R.A."/>
            <person name="Evans C.A."/>
            <person name="Gocayne J.D."/>
            <person name="Amanatides P.G."/>
            <person name="Scherer S.E."/>
            <person name="Li P.W."/>
            <person name="Hoskins R.A."/>
            <person name="Galle R.F."/>
            <person name="George R.A."/>
            <person name="Lewis S.E."/>
            <person name="Richards S."/>
            <person name="Ashburner M."/>
            <person name="Henderson S.N."/>
            <person name="Sutton G.G."/>
            <person name="Wortman J.R."/>
            <person name="Yandell M.D."/>
            <person name="Zhang Q."/>
            <person name="Chen L.X."/>
            <person name="Brandon R.C."/>
            <person name="Rogers Y.-H.C."/>
            <person name="Blazej R.G."/>
            <person name="Champe M."/>
            <person name="Pfeiffer B.D."/>
            <person name="Wan K.H."/>
            <person name="Doyle C."/>
            <person name="Baxter E.G."/>
            <person name="Helt G."/>
            <person name="Nelson C.R."/>
            <person name="Miklos G.L.G."/>
            <person name="Abril J.F."/>
            <person name="Agbayani A."/>
            <person name="An H.-J."/>
            <person name="Andrews-Pfannkoch C."/>
            <person name="Baldwin D."/>
            <person name="Ballew R.M."/>
            <person name="Basu A."/>
            <person name="Baxendale J."/>
            <person name="Bayraktaroglu L."/>
            <person name="Beasley E.M."/>
            <person name="Beeson K.Y."/>
            <person name="Benos P.V."/>
            <person name="Berman B.P."/>
            <person name="Bhandari D."/>
            <person name="Bolshakov S."/>
            <person name="Borkova D."/>
            <person name="Botchan M.R."/>
            <person name="Bouck J."/>
            <person name="Brokstein P."/>
            <person name="Brottier P."/>
            <person name="Burtis K.C."/>
            <person name="Busam D.A."/>
            <person name="Butler H."/>
            <person name="Cadieu E."/>
            <person name="Center A."/>
            <person name="Chandra I."/>
            <person name="Cherry J.M."/>
            <person name="Cawley S."/>
            <person name="Dahlke C."/>
            <person name="Davenport L.B."/>
            <person name="Davies P."/>
            <person name="de Pablos B."/>
            <person name="Delcher A."/>
            <person name="Deng Z."/>
            <person name="Mays A.D."/>
            <person name="Dew I."/>
            <person name="Dietz S.M."/>
            <person name="Dodson K."/>
            <person name="Doup L.E."/>
            <person name="Downes M."/>
            <person name="Dugan-Rocha S."/>
            <person name="Dunkov B.C."/>
            <person name="Dunn P."/>
            <person name="Durbin K.J."/>
            <person name="Evangelista C.C."/>
            <person name="Ferraz C."/>
            <person name="Ferriera S."/>
            <person name="Fleischmann W."/>
            <person name="Fosler C."/>
            <person name="Gabrielian A.E."/>
            <person name="Garg N.S."/>
            <person name="Gelbart W.M."/>
            <person name="Glasser K."/>
            <person name="Glodek A."/>
            <person name="Gong F."/>
            <person name="Gorrell J.H."/>
            <person name="Gu Z."/>
            <person name="Guan P."/>
            <person name="Harris M."/>
            <person name="Harris N.L."/>
            <person name="Harvey D.A."/>
            <person name="Heiman T.J."/>
            <person name="Hernandez J.R."/>
            <person name="Houck J."/>
            <person name="Hostin D."/>
            <person name="Houston K.A."/>
            <person name="Howland T.J."/>
            <person name="Wei M.-H."/>
            <person name="Ibegwam C."/>
            <person name="Jalali M."/>
            <person name="Kalush F."/>
            <person name="Karpen G.H."/>
            <person name="Ke Z."/>
            <person name="Kennison J.A."/>
            <person name="Ketchum K.A."/>
            <person name="Kimmel B.E."/>
            <person name="Kodira C.D."/>
            <person name="Kraft C.L."/>
            <person name="Kravitz S."/>
            <person name="Kulp D."/>
            <person name="Lai Z."/>
            <person name="Lasko P."/>
            <person name="Lei Y."/>
            <person name="Levitsky A.A."/>
            <person name="Li J.H."/>
            <person name="Li Z."/>
            <person name="Liang Y."/>
            <person name="Lin X."/>
            <person name="Liu X."/>
            <person name="Mattei B."/>
            <person name="McIntosh T.C."/>
            <person name="McLeod M.P."/>
            <person name="McPherson D."/>
            <person name="Merkulov G."/>
            <person name="Milshina N.V."/>
            <person name="Mobarry C."/>
            <person name="Morris J."/>
            <person name="Moshrefi A."/>
            <person name="Mount S.M."/>
            <person name="Moy M."/>
            <person name="Murphy B."/>
            <person name="Murphy L."/>
            <person name="Muzny D.M."/>
            <person name="Nelson D.L."/>
            <person name="Nelson D.R."/>
            <person name="Nelson K.A."/>
            <person name="Nixon K."/>
            <person name="Nusskern D.R."/>
            <person name="Pacleb J.M."/>
            <person name="Palazzolo M."/>
            <person name="Pittman G.S."/>
            <person name="Pan S."/>
            <person name="Pollard J."/>
            <person name="Puri V."/>
            <person name="Reese M.G."/>
            <person name="Reinert K."/>
            <person name="Remington K."/>
            <person name="Saunders R.D.C."/>
            <person name="Scheeler F."/>
            <person name="Shen H."/>
            <person name="Shue B.C."/>
            <person name="Siden-Kiamos I."/>
            <person name="Simpson M."/>
            <person name="Skupski M.P."/>
            <person name="Smith T.J."/>
            <person name="Spier E."/>
            <person name="Spradling A.C."/>
            <person name="Stapleton M."/>
            <person name="Strong R."/>
            <person name="Sun E."/>
            <person name="Svirskas R."/>
            <person name="Tector C."/>
            <person name="Turner R."/>
            <person name="Venter E."/>
            <person name="Wang A.H."/>
            <person name="Wang X."/>
            <person name="Wang Z.-Y."/>
            <person name="Wassarman D.A."/>
            <person name="Weinstock G.M."/>
            <person name="Weissenbach J."/>
            <person name="Williams S.M."/>
            <person name="Woodage T."/>
            <person name="Worley K.C."/>
            <person name="Wu D."/>
            <person name="Yang S."/>
            <person name="Yao Q.A."/>
            <person name="Ye J."/>
            <person name="Yeh R.-F."/>
            <person name="Zaveri J.S."/>
            <person name="Zhan M."/>
            <person name="Zhang G."/>
            <person name="Zhao Q."/>
            <person name="Zheng L."/>
            <person name="Zheng X.H."/>
            <person name="Zhong F.N."/>
            <person name="Zhong W."/>
            <person name="Zhou X."/>
            <person name="Zhu S.C."/>
            <person name="Zhu X."/>
            <person name="Smith H.O."/>
            <person name="Gibbs R.A."/>
            <person name="Myers E.W."/>
            <person name="Rubin G.M."/>
            <person name="Venter J.C."/>
        </authorList>
    </citation>
    <scope>NUCLEOTIDE SEQUENCE [LARGE SCALE GENOMIC DNA]</scope>
    <source>
        <strain>Berkeley</strain>
    </source>
</reference>
<reference key="3">
    <citation type="journal article" date="2002" name="Genome Biol.">
        <title>Annotation of the Drosophila melanogaster euchromatic genome: a systematic review.</title>
        <authorList>
            <person name="Misra S."/>
            <person name="Crosby M.A."/>
            <person name="Mungall C.J."/>
            <person name="Matthews B.B."/>
            <person name="Campbell K.S."/>
            <person name="Hradecky P."/>
            <person name="Huang Y."/>
            <person name="Kaminker J.S."/>
            <person name="Millburn G.H."/>
            <person name="Prochnik S.E."/>
            <person name="Smith C.D."/>
            <person name="Tupy J.L."/>
            <person name="Whitfield E.J."/>
            <person name="Bayraktaroglu L."/>
            <person name="Berman B.P."/>
            <person name="Bettencourt B.R."/>
            <person name="Celniker S.E."/>
            <person name="de Grey A.D.N.J."/>
            <person name="Drysdale R.A."/>
            <person name="Harris N.L."/>
            <person name="Richter J."/>
            <person name="Russo S."/>
            <person name="Schroeder A.J."/>
            <person name="Shu S.Q."/>
            <person name="Stapleton M."/>
            <person name="Yamada C."/>
            <person name="Ashburner M."/>
            <person name="Gelbart W.M."/>
            <person name="Rubin G.M."/>
            <person name="Lewis S.E."/>
        </authorList>
    </citation>
    <scope>GENOME REANNOTATION</scope>
    <source>
        <strain>Berkeley</strain>
    </source>
</reference>
<reference evidence="5" key="4">
    <citation type="journal article" date="2003" name="Neuron">
        <title>Contribution of Drosophila DEG/ENaC genes to salt taste.</title>
        <authorList>
            <person name="Liu L."/>
            <person name="Leonard A.S."/>
            <person name="Motto D.G."/>
            <person name="Feller M.A."/>
            <person name="Price M.P."/>
            <person name="Johnson W.A."/>
            <person name="Welsh M.J."/>
        </authorList>
    </citation>
    <scope>FUNCTION</scope>
    <scope>TISSUE SPECIFICITY</scope>
</reference>
<name>PPK11_DROME</name>
<gene>
    <name type="primary">ppk11</name>
    <name type="ORF">CG34058</name>
    <name type="ORF">CG4110</name>
</gene>
<organism>
    <name type="scientific">Drosophila melanogaster</name>
    <name type="common">Fruit fly</name>
    <dbReference type="NCBI Taxonomy" id="7227"/>
    <lineage>
        <taxon>Eukaryota</taxon>
        <taxon>Metazoa</taxon>
        <taxon>Ecdysozoa</taxon>
        <taxon>Arthropoda</taxon>
        <taxon>Hexapoda</taxon>
        <taxon>Insecta</taxon>
        <taxon>Pterygota</taxon>
        <taxon>Neoptera</taxon>
        <taxon>Endopterygota</taxon>
        <taxon>Diptera</taxon>
        <taxon>Brachycera</taxon>
        <taxon>Muscomorpha</taxon>
        <taxon>Ephydroidea</taxon>
        <taxon>Drosophilidae</taxon>
        <taxon>Drosophila</taxon>
        <taxon>Sophophora</taxon>
    </lineage>
</organism>
<protein>
    <recommendedName>
        <fullName>Pickpocket protein 11</fullName>
        <shortName evidence="4 7">PPK11</shortName>
    </recommendedName>
</protein>
<accession>Q9VL84</accession>
<accession>Q86LH0</accession>